<organism>
    <name type="scientific">Anaeromyxobacter sp. (strain K)</name>
    <dbReference type="NCBI Taxonomy" id="447217"/>
    <lineage>
        <taxon>Bacteria</taxon>
        <taxon>Pseudomonadati</taxon>
        <taxon>Myxococcota</taxon>
        <taxon>Myxococcia</taxon>
        <taxon>Myxococcales</taxon>
        <taxon>Cystobacterineae</taxon>
        <taxon>Anaeromyxobacteraceae</taxon>
        <taxon>Anaeromyxobacter</taxon>
    </lineage>
</organism>
<comment type="function">
    <text evidence="1">Catalyzes the NAD(+)-dependent oxidation of L-threonine to 2-amino-3-ketobutyrate.</text>
</comment>
<comment type="catalytic activity">
    <reaction evidence="1">
        <text>L-threonine + NAD(+) = (2S)-2-amino-3-oxobutanoate + NADH + H(+)</text>
        <dbReference type="Rhea" id="RHEA:13161"/>
        <dbReference type="ChEBI" id="CHEBI:15378"/>
        <dbReference type="ChEBI" id="CHEBI:57540"/>
        <dbReference type="ChEBI" id="CHEBI:57926"/>
        <dbReference type="ChEBI" id="CHEBI:57945"/>
        <dbReference type="ChEBI" id="CHEBI:78948"/>
        <dbReference type="EC" id="1.1.1.103"/>
    </reaction>
</comment>
<comment type="cofactor">
    <cofactor evidence="1">
        <name>Zn(2+)</name>
        <dbReference type="ChEBI" id="CHEBI:29105"/>
    </cofactor>
    <text evidence="1">Binds 2 Zn(2+) ions per subunit.</text>
</comment>
<comment type="pathway">
    <text evidence="1">Amino-acid degradation; L-threonine degradation via oxydo-reductase pathway; glycine from L-threonine: step 1/2.</text>
</comment>
<comment type="subunit">
    <text evidence="1">Homotetramer.</text>
</comment>
<comment type="subcellular location">
    <subcellularLocation>
        <location evidence="1">Cytoplasm</location>
    </subcellularLocation>
</comment>
<comment type="similarity">
    <text evidence="1">Belongs to the zinc-containing alcohol dehydrogenase family.</text>
</comment>
<protein>
    <recommendedName>
        <fullName evidence="1">L-threonine 3-dehydrogenase</fullName>
        <shortName evidence="1">TDH</shortName>
        <ecNumber evidence="1">1.1.1.103</ecNumber>
    </recommendedName>
</protein>
<feature type="chain" id="PRO_1000130536" description="L-threonine 3-dehydrogenase">
    <location>
        <begin position="1"/>
        <end position="345"/>
    </location>
</feature>
<feature type="active site" description="Charge relay system" evidence="1">
    <location>
        <position position="41"/>
    </location>
</feature>
<feature type="active site" description="Charge relay system" evidence="1">
    <location>
        <position position="44"/>
    </location>
</feature>
<feature type="binding site" evidence="1">
    <location>
        <position position="39"/>
    </location>
    <ligand>
        <name>Zn(2+)</name>
        <dbReference type="ChEBI" id="CHEBI:29105"/>
        <label>1</label>
        <note>catalytic</note>
    </ligand>
</feature>
<feature type="binding site" evidence="1">
    <location>
        <position position="64"/>
    </location>
    <ligand>
        <name>Zn(2+)</name>
        <dbReference type="ChEBI" id="CHEBI:29105"/>
        <label>1</label>
        <note>catalytic</note>
    </ligand>
</feature>
<feature type="binding site" evidence="1">
    <location>
        <position position="65"/>
    </location>
    <ligand>
        <name>Zn(2+)</name>
        <dbReference type="ChEBI" id="CHEBI:29105"/>
        <label>1</label>
        <note>catalytic</note>
    </ligand>
</feature>
<feature type="binding site" evidence="1">
    <location>
        <position position="94"/>
    </location>
    <ligand>
        <name>Zn(2+)</name>
        <dbReference type="ChEBI" id="CHEBI:29105"/>
        <label>2</label>
    </ligand>
</feature>
<feature type="binding site" evidence="1">
    <location>
        <position position="97"/>
    </location>
    <ligand>
        <name>Zn(2+)</name>
        <dbReference type="ChEBI" id="CHEBI:29105"/>
        <label>2</label>
    </ligand>
</feature>
<feature type="binding site" evidence="1">
    <location>
        <position position="100"/>
    </location>
    <ligand>
        <name>Zn(2+)</name>
        <dbReference type="ChEBI" id="CHEBI:29105"/>
        <label>2</label>
    </ligand>
</feature>
<feature type="binding site" evidence="1">
    <location>
        <position position="108"/>
    </location>
    <ligand>
        <name>Zn(2+)</name>
        <dbReference type="ChEBI" id="CHEBI:29105"/>
        <label>2</label>
    </ligand>
</feature>
<feature type="binding site" evidence="1">
    <location>
        <position position="176"/>
    </location>
    <ligand>
        <name>NAD(+)</name>
        <dbReference type="ChEBI" id="CHEBI:57540"/>
    </ligand>
</feature>
<feature type="binding site" evidence="1">
    <location>
        <position position="196"/>
    </location>
    <ligand>
        <name>NAD(+)</name>
        <dbReference type="ChEBI" id="CHEBI:57540"/>
    </ligand>
</feature>
<feature type="binding site" evidence="1">
    <location>
        <position position="201"/>
    </location>
    <ligand>
        <name>NAD(+)</name>
        <dbReference type="ChEBI" id="CHEBI:57540"/>
    </ligand>
</feature>
<feature type="binding site" evidence="1">
    <location>
        <begin position="263"/>
        <end position="265"/>
    </location>
    <ligand>
        <name>NAD(+)</name>
        <dbReference type="ChEBI" id="CHEBI:57540"/>
    </ligand>
</feature>
<feature type="binding site" evidence="1">
    <location>
        <begin position="287"/>
        <end position="288"/>
    </location>
    <ligand>
        <name>NAD(+)</name>
        <dbReference type="ChEBI" id="CHEBI:57540"/>
    </ligand>
</feature>
<feature type="site" description="Important for catalytic activity for the proton relay mechanism but does not participate directly in the coordination of zinc atom" evidence="1">
    <location>
        <position position="149"/>
    </location>
</feature>
<gene>
    <name evidence="1" type="primary">tdh</name>
    <name type="ordered locus">AnaeK_1783</name>
</gene>
<sequence>MKALVKAKREEGIWMQHDVPVPEVGVHDVMIKVTKSAICGTDVHIYNWDEWSQKTVPVPMVVGHEYVGRVEKVGAEVEAFRPGERVSGEGHVTCGFCRNCRAGRRHLCRHTVGVGVNRPGSFAEYVVIPADNVYRIPDDIPDDIAAIFDPFGNATHTALSFDLVGEDVLVTGAGPIGVMAAAIARHVGARHVVVTDVNDYRLDLARRMGASRAVNVAKEDLRAVMSELGMREGFDVGLEMSGNGRAFRQLLEVMNHGGKVALLGIMAGPEPVDWSQVVFKGLQLKGVYGREMYETWYKMVAMLQSGLDLSAVVTHRFSIDDFQQGFDVMRSGRSGKVVLDWGAAR</sequence>
<dbReference type="EC" id="1.1.1.103" evidence="1"/>
<dbReference type="EMBL" id="CP001131">
    <property type="protein sequence ID" value="ACG73012.1"/>
    <property type="molecule type" value="Genomic_DNA"/>
</dbReference>
<dbReference type="RefSeq" id="WP_012525828.1">
    <property type="nucleotide sequence ID" value="NC_011145.1"/>
</dbReference>
<dbReference type="SMR" id="B4UMJ1"/>
<dbReference type="KEGG" id="ank:AnaeK_1783"/>
<dbReference type="HOGENOM" id="CLU_026673_11_0_7"/>
<dbReference type="OrthoDB" id="5484143at2"/>
<dbReference type="UniPathway" id="UPA00046">
    <property type="reaction ID" value="UER00505"/>
</dbReference>
<dbReference type="Proteomes" id="UP000001871">
    <property type="component" value="Chromosome"/>
</dbReference>
<dbReference type="GO" id="GO:0005737">
    <property type="term" value="C:cytoplasm"/>
    <property type="evidence" value="ECO:0007669"/>
    <property type="project" value="UniProtKB-SubCell"/>
</dbReference>
<dbReference type="GO" id="GO:0008743">
    <property type="term" value="F:L-threonine 3-dehydrogenase activity"/>
    <property type="evidence" value="ECO:0007669"/>
    <property type="project" value="UniProtKB-UniRule"/>
</dbReference>
<dbReference type="GO" id="GO:0008270">
    <property type="term" value="F:zinc ion binding"/>
    <property type="evidence" value="ECO:0007669"/>
    <property type="project" value="UniProtKB-UniRule"/>
</dbReference>
<dbReference type="GO" id="GO:0019518">
    <property type="term" value="P:L-threonine catabolic process to glycine"/>
    <property type="evidence" value="ECO:0007669"/>
    <property type="project" value="UniProtKB-UniPathway"/>
</dbReference>
<dbReference type="Gene3D" id="3.90.180.10">
    <property type="entry name" value="Medium-chain alcohol dehydrogenases, catalytic domain"/>
    <property type="match status" value="1"/>
</dbReference>
<dbReference type="Gene3D" id="3.40.50.720">
    <property type="entry name" value="NAD(P)-binding Rossmann-like Domain"/>
    <property type="match status" value="1"/>
</dbReference>
<dbReference type="HAMAP" id="MF_00627">
    <property type="entry name" value="Thr_dehydrog"/>
    <property type="match status" value="1"/>
</dbReference>
<dbReference type="InterPro" id="IPR013149">
    <property type="entry name" value="ADH-like_C"/>
</dbReference>
<dbReference type="InterPro" id="IPR013154">
    <property type="entry name" value="ADH-like_N"/>
</dbReference>
<dbReference type="InterPro" id="IPR002328">
    <property type="entry name" value="ADH_Zn_CS"/>
</dbReference>
<dbReference type="InterPro" id="IPR011032">
    <property type="entry name" value="GroES-like_sf"/>
</dbReference>
<dbReference type="InterPro" id="IPR004627">
    <property type="entry name" value="L-Threonine_3-DHase"/>
</dbReference>
<dbReference type="InterPro" id="IPR036291">
    <property type="entry name" value="NAD(P)-bd_dom_sf"/>
</dbReference>
<dbReference type="InterPro" id="IPR020843">
    <property type="entry name" value="PKS_ER"/>
</dbReference>
<dbReference type="InterPro" id="IPR050129">
    <property type="entry name" value="Zn_alcohol_dh"/>
</dbReference>
<dbReference type="NCBIfam" id="NF003808">
    <property type="entry name" value="PRK05396.1"/>
    <property type="match status" value="1"/>
</dbReference>
<dbReference type="NCBIfam" id="TIGR00692">
    <property type="entry name" value="tdh"/>
    <property type="match status" value="1"/>
</dbReference>
<dbReference type="PANTHER" id="PTHR43401">
    <property type="entry name" value="L-THREONINE 3-DEHYDROGENASE"/>
    <property type="match status" value="1"/>
</dbReference>
<dbReference type="PANTHER" id="PTHR43401:SF2">
    <property type="entry name" value="L-THREONINE 3-DEHYDROGENASE"/>
    <property type="match status" value="1"/>
</dbReference>
<dbReference type="Pfam" id="PF08240">
    <property type="entry name" value="ADH_N"/>
    <property type="match status" value="1"/>
</dbReference>
<dbReference type="Pfam" id="PF00107">
    <property type="entry name" value="ADH_zinc_N"/>
    <property type="match status" value="1"/>
</dbReference>
<dbReference type="SMART" id="SM00829">
    <property type="entry name" value="PKS_ER"/>
    <property type="match status" value="1"/>
</dbReference>
<dbReference type="SUPFAM" id="SSF50129">
    <property type="entry name" value="GroES-like"/>
    <property type="match status" value="1"/>
</dbReference>
<dbReference type="SUPFAM" id="SSF51735">
    <property type="entry name" value="NAD(P)-binding Rossmann-fold domains"/>
    <property type="match status" value="1"/>
</dbReference>
<dbReference type="PROSITE" id="PS00059">
    <property type="entry name" value="ADH_ZINC"/>
    <property type="match status" value="1"/>
</dbReference>
<keyword id="KW-0963">Cytoplasm</keyword>
<keyword id="KW-0479">Metal-binding</keyword>
<keyword id="KW-0520">NAD</keyword>
<keyword id="KW-0560">Oxidoreductase</keyword>
<keyword id="KW-0862">Zinc</keyword>
<reference key="1">
    <citation type="submission" date="2008-08" db="EMBL/GenBank/DDBJ databases">
        <title>Complete sequence of Anaeromyxobacter sp. K.</title>
        <authorList>
            <consortium name="US DOE Joint Genome Institute"/>
            <person name="Lucas S."/>
            <person name="Copeland A."/>
            <person name="Lapidus A."/>
            <person name="Glavina del Rio T."/>
            <person name="Dalin E."/>
            <person name="Tice H."/>
            <person name="Bruce D."/>
            <person name="Goodwin L."/>
            <person name="Pitluck S."/>
            <person name="Saunders E."/>
            <person name="Brettin T."/>
            <person name="Detter J.C."/>
            <person name="Han C."/>
            <person name="Larimer F."/>
            <person name="Land M."/>
            <person name="Hauser L."/>
            <person name="Kyrpides N."/>
            <person name="Ovchinnikiva G."/>
            <person name="Beliaev A."/>
        </authorList>
    </citation>
    <scope>NUCLEOTIDE SEQUENCE [LARGE SCALE GENOMIC DNA]</scope>
    <source>
        <strain>K</strain>
    </source>
</reference>
<evidence type="ECO:0000255" key="1">
    <source>
        <dbReference type="HAMAP-Rule" id="MF_00627"/>
    </source>
</evidence>
<proteinExistence type="inferred from homology"/>
<accession>B4UMJ1</accession>
<name>TDH_ANASK</name>